<sequence>MAHKKAGGSSRNGRDSESKRLGVKKFGGEAVIAGNIIVRQRGTQWHPGSNVGLGKDHTIFALTAGNVDYRTKANGRVYVSVMPKAEAAE</sequence>
<keyword id="KW-0687">Ribonucleoprotein</keyword>
<keyword id="KW-0689">Ribosomal protein</keyword>
<proteinExistence type="inferred from homology"/>
<reference key="1">
    <citation type="journal article" date="2010" name="Appl. Environ. Microbiol.">
        <title>Conserved symbiotic plasmid DNA sequences in the multireplicon pangenomic structure of Rhizobium etli.</title>
        <authorList>
            <person name="Gonzalez V."/>
            <person name="Acosta J.L."/>
            <person name="Santamaria R.I."/>
            <person name="Bustos P."/>
            <person name="Fernandez J.L."/>
            <person name="Hernandez Gonzalez I.L."/>
            <person name="Diaz R."/>
            <person name="Flores M."/>
            <person name="Palacios R."/>
            <person name="Mora J."/>
            <person name="Davila G."/>
        </authorList>
    </citation>
    <scope>NUCLEOTIDE SEQUENCE [LARGE SCALE GENOMIC DNA]</scope>
    <source>
        <strain>CIAT 652</strain>
    </source>
</reference>
<comment type="similarity">
    <text evidence="1">Belongs to the bacterial ribosomal protein bL27 family.</text>
</comment>
<evidence type="ECO:0000255" key="1">
    <source>
        <dbReference type="HAMAP-Rule" id="MF_00539"/>
    </source>
</evidence>
<evidence type="ECO:0000256" key="2">
    <source>
        <dbReference type="SAM" id="MobiDB-lite"/>
    </source>
</evidence>
<evidence type="ECO:0000305" key="3"/>
<feature type="chain" id="PRO_1000128796" description="Large ribosomal subunit protein bL27">
    <location>
        <begin position="1"/>
        <end position="89"/>
    </location>
</feature>
<feature type="region of interest" description="Disordered" evidence="2">
    <location>
        <begin position="1"/>
        <end position="22"/>
    </location>
</feature>
<accession>B3PRY9</accession>
<gene>
    <name evidence="1" type="primary">rpmA</name>
    <name type="ordered locus">RHECIAT_CH0004352</name>
</gene>
<organism>
    <name type="scientific">Rhizobium etli (strain CIAT 652)</name>
    <dbReference type="NCBI Taxonomy" id="491916"/>
    <lineage>
        <taxon>Bacteria</taxon>
        <taxon>Pseudomonadati</taxon>
        <taxon>Pseudomonadota</taxon>
        <taxon>Alphaproteobacteria</taxon>
        <taxon>Hyphomicrobiales</taxon>
        <taxon>Rhizobiaceae</taxon>
        <taxon>Rhizobium/Agrobacterium group</taxon>
        <taxon>Rhizobium</taxon>
    </lineage>
</organism>
<name>RL27_RHIE6</name>
<protein>
    <recommendedName>
        <fullName evidence="1">Large ribosomal subunit protein bL27</fullName>
    </recommendedName>
    <alternativeName>
        <fullName evidence="3">50S ribosomal protein L27</fullName>
    </alternativeName>
</protein>
<dbReference type="EMBL" id="CP001074">
    <property type="protein sequence ID" value="ACE93279.1"/>
    <property type="molecule type" value="Genomic_DNA"/>
</dbReference>
<dbReference type="SMR" id="B3PRY9"/>
<dbReference type="KEGG" id="rec:RHECIAT_CH0004352"/>
<dbReference type="eggNOG" id="COG0211">
    <property type="taxonomic scope" value="Bacteria"/>
</dbReference>
<dbReference type="HOGENOM" id="CLU_095424_4_1_5"/>
<dbReference type="Proteomes" id="UP000008817">
    <property type="component" value="Chromosome"/>
</dbReference>
<dbReference type="GO" id="GO:0022625">
    <property type="term" value="C:cytosolic large ribosomal subunit"/>
    <property type="evidence" value="ECO:0007669"/>
    <property type="project" value="TreeGrafter"/>
</dbReference>
<dbReference type="GO" id="GO:0003735">
    <property type="term" value="F:structural constituent of ribosome"/>
    <property type="evidence" value="ECO:0007669"/>
    <property type="project" value="InterPro"/>
</dbReference>
<dbReference type="GO" id="GO:0006412">
    <property type="term" value="P:translation"/>
    <property type="evidence" value="ECO:0007669"/>
    <property type="project" value="UniProtKB-UniRule"/>
</dbReference>
<dbReference type="FunFam" id="2.40.50.100:FF:000020">
    <property type="entry name" value="50S ribosomal protein L27"/>
    <property type="match status" value="1"/>
</dbReference>
<dbReference type="Gene3D" id="2.40.50.100">
    <property type="match status" value="1"/>
</dbReference>
<dbReference type="HAMAP" id="MF_00539">
    <property type="entry name" value="Ribosomal_bL27"/>
    <property type="match status" value="1"/>
</dbReference>
<dbReference type="InterPro" id="IPR001684">
    <property type="entry name" value="Ribosomal_bL27"/>
</dbReference>
<dbReference type="InterPro" id="IPR018261">
    <property type="entry name" value="Ribosomal_bL27_CS"/>
</dbReference>
<dbReference type="NCBIfam" id="TIGR00062">
    <property type="entry name" value="L27"/>
    <property type="match status" value="1"/>
</dbReference>
<dbReference type="PANTHER" id="PTHR15893:SF0">
    <property type="entry name" value="LARGE RIBOSOMAL SUBUNIT PROTEIN BL27M"/>
    <property type="match status" value="1"/>
</dbReference>
<dbReference type="PANTHER" id="PTHR15893">
    <property type="entry name" value="RIBOSOMAL PROTEIN L27"/>
    <property type="match status" value="1"/>
</dbReference>
<dbReference type="Pfam" id="PF01016">
    <property type="entry name" value="Ribosomal_L27"/>
    <property type="match status" value="1"/>
</dbReference>
<dbReference type="PRINTS" id="PR00063">
    <property type="entry name" value="RIBOSOMALL27"/>
</dbReference>
<dbReference type="SUPFAM" id="SSF110324">
    <property type="entry name" value="Ribosomal L27 protein-like"/>
    <property type="match status" value="1"/>
</dbReference>
<dbReference type="PROSITE" id="PS00831">
    <property type="entry name" value="RIBOSOMAL_L27"/>
    <property type="match status" value="1"/>
</dbReference>